<comment type="function">
    <text evidence="1">Binds directly to 23S rRNA. The L1 stalk is quite mobile in the ribosome, and is involved in E site tRNA release.</text>
</comment>
<comment type="function">
    <text evidence="1">Protein L1 is also a translational repressor protein, it controls the translation of the L11 operon by binding to its mRNA.</text>
</comment>
<comment type="subunit">
    <text evidence="1">Part of the 50S ribosomal subunit.</text>
</comment>
<comment type="similarity">
    <text evidence="1">Belongs to the universal ribosomal protein uL1 family.</text>
</comment>
<feature type="chain" id="PRO_1000141372" description="Large ribosomal subunit protein uL1">
    <location>
        <begin position="1"/>
        <end position="232"/>
    </location>
</feature>
<gene>
    <name evidence="1" type="primary">rplA</name>
    <name type="ordered locus">BceJ2315_02260</name>
    <name type="ORF">BCAL0223</name>
</gene>
<keyword id="KW-0678">Repressor</keyword>
<keyword id="KW-0687">Ribonucleoprotein</keyword>
<keyword id="KW-0689">Ribosomal protein</keyword>
<keyword id="KW-0694">RNA-binding</keyword>
<keyword id="KW-0699">rRNA-binding</keyword>
<keyword id="KW-0810">Translation regulation</keyword>
<keyword id="KW-0820">tRNA-binding</keyword>
<evidence type="ECO:0000255" key="1">
    <source>
        <dbReference type="HAMAP-Rule" id="MF_01318"/>
    </source>
</evidence>
<evidence type="ECO:0000305" key="2"/>
<reference key="1">
    <citation type="journal article" date="2009" name="J. Bacteriol.">
        <title>The genome of Burkholderia cenocepacia J2315, an epidemic pathogen of cystic fibrosis patients.</title>
        <authorList>
            <person name="Holden M.T."/>
            <person name="Seth-Smith H.M."/>
            <person name="Crossman L.C."/>
            <person name="Sebaihia M."/>
            <person name="Bentley S.D."/>
            <person name="Cerdeno-Tarraga A.M."/>
            <person name="Thomson N.R."/>
            <person name="Bason N."/>
            <person name="Quail M.A."/>
            <person name="Sharp S."/>
            <person name="Cherevach I."/>
            <person name="Churcher C."/>
            <person name="Goodhead I."/>
            <person name="Hauser H."/>
            <person name="Holroyd N."/>
            <person name="Mungall K."/>
            <person name="Scott P."/>
            <person name="Walker D."/>
            <person name="White B."/>
            <person name="Rose H."/>
            <person name="Iversen P."/>
            <person name="Mil-Homens D."/>
            <person name="Rocha E.P."/>
            <person name="Fialho A.M."/>
            <person name="Baldwin A."/>
            <person name="Dowson C."/>
            <person name="Barrell B.G."/>
            <person name="Govan J.R."/>
            <person name="Vandamme P."/>
            <person name="Hart C.A."/>
            <person name="Mahenthiralingam E."/>
            <person name="Parkhill J."/>
        </authorList>
    </citation>
    <scope>NUCLEOTIDE SEQUENCE [LARGE SCALE GENOMIC DNA]</scope>
    <source>
        <strain>ATCC BAA-245 / DSM 16553 / LMG 16656 / NCTC 13227 / J2315 / CF5610</strain>
    </source>
</reference>
<organism>
    <name type="scientific">Burkholderia cenocepacia (strain ATCC BAA-245 / DSM 16553 / LMG 16656 / NCTC 13227 / J2315 / CF5610)</name>
    <name type="common">Burkholderia cepacia (strain J2315)</name>
    <dbReference type="NCBI Taxonomy" id="216591"/>
    <lineage>
        <taxon>Bacteria</taxon>
        <taxon>Pseudomonadati</taxon>
        <taxon>Pseudomonadota</taxon>
        <taxon>Betaproteobacteria</taxon>
        <taxon>Burkholderiales</taxon>
        <taxon>Burkholderiaceae</taxon>
        <taxon>Burkholderia</taxon>
        <taxon>Burkholderia cepacia complex</taxon>
    </lineage>
</organism>
<dbReference type="EMBL" id="AM747720">
    <property type="protein sequence ID" value="CAR50534.1"/>
    <property type="molecule type" value="Genomic_DNA"/>
</dbReference>
<dbReference type="RefSeq" id="WP_006482906.1">
    <property type="nucleotide sequence ID" value="NC_011000.1"/>
</dbReference>
<dbReference type="SMR" id="B4E5A9"/>
<dbReference type="GeneID" id="93193462"/>
<dbReference type="KEGG" id="bcj:BCAL0223"/>
<dbReference type="eggNOG" id="COG0081">
    <property type="taxonomic scope" value="Bacteria"/>
</dbReference>
<dbReference type="HOGENOM" id="CLU_062853_0_0_4"/>
<dbReference type="BioCyc" id="BCEN216591:G1G1V-265-MONOMER"/>
<dbReference type="Proteomes" id="UP000001035">
    <property type="component" value="Chromosome 1"/>
</dbReference>
<dbReference type="GO" id="GO:0022625">
    <property type="term" value="C:cytosolic large ribosomal subunit"/>
    <property type="evidence" value="ECO:0007669"/>
    <property type="project" value="TreeGrafter"/>
</dbReference>
<dbReference type="GO" id="GO:0019843">
    <property type="term" value="F:rRNA binding"/>
    <property type="evidence" value="ECO:0007669"/>
    <property type="project" value="UniProtKB-UniRule"/>
</dbReference>
<dbReference type="GO" id="GO:0003735">
    <property type="term" value="F:structural constituent of ribosome"/>
    <property type="evidence" value="ECO:0007669"/>
    <property type="project" value="InterPro"/>
</dbReference>
<dbReference type="GO" id="GO:0000049">
    <property type="term" value="F:tRNA binding"/>
    <property type="evidence" value="ECO:0007669"/>
    <property type="project" value="UniProtKB-KW"/>
</dbReference>
<dbReference type="GO" id="GO:0006417">
    <property type="term" value="P:regulation of translation"/>
    <property type="evidence" value="ECO:0007669"/>
    <property type="project" value="UniProtKB-KW"/>
</dbReference>
<dbReference type="GO" id="GO:0006412">
    <property type="term" value="P:translation"/>
    <property type="evidence" value="ECO:0007669"/>
    <property type="project" value="UniProtKB-UniRule"/>
</dbReference>
<dbReference type="CDD" id="cd00403">
    <property type="entry name" value="Ribosomal_L1"/>
    <property type="match status" value="1"/>
</dbReference>
<dbReference type="FunFam" id="3.40.50.790:FF:000001">
    <property type="entry name" value="50S ribosomal protein L1"/>
    <property type="match status" value="1"/>
</dbReference>
<dbReference type="Gene3D" id="3.30.190.20">
    <property type="match status" value="1"/>
</dbReference>
<dbReference type="Gene3D" id="3.40.50.790">
    <property type="match status" value="1"/>
</dbReference>
<dbReference type="HAMAP" id="MF_01318_B">
    <property type="entry name" value="Ribosomal_uL1_B"/>
    <property type="match status" value="1"/>
</dbReference>
<dbReference type="InterPro" id="IPR005878">
    <property type="entry name" value="Ribosom_uL1_bac-type"/>
</dbReference>
<dbReference type="InterPro" id="IPR002143">
    <property type="entry name" value="Ribosomal_uL1"/>
</dbReference>
<dbReference type="InterPro" id="IPR023674">
    <property type="entry name" value="Ribosomal_uL1-like"/>
</dbReference>
<dbReference type="InterPro" id="IPR028364">
    <property type="entry name" value="Ribosomal_uL1/biogenesis"/>
</dbReference>
<dbReference type="InterPro" id="IPR016095">
    <property type="entry name" value="Ribosomal_uL1_3-a/b-sand"/>
</dbReference>
<dbReference type="InterPro" id="IPR023673">
    <property type="entry name" value="Ribosomal_uL1_CS"/>
</dbReference>
<dbReference type="NCBIfam" id="TIGR01169">
    <property type="entry name" value="rplA_bact"/>
    <property type="match status" value="1"/>
</dbReference>
<dbReference type="PANTHER" id="PTHR36427">
    <property type="entry name" value="54S RIBOSOMAL PROTEIN L1, MITOCHONDRIAL"/>
    <property type="match status" value="1"/>
</dbReference>
<dbReference type="PANTHER" id="PTHR36427:SF3">
    <property type="entry name" value="LARGE RIBOSOMAL SUBUNIT PROTEIN UL1M"/>
    <property type="match status" value="1"/>
</dbReference>
<dbReference type="Pfam" id="PF00687">
    <property type="entry name" value="Ribosomal_L1"/>
    <property type="match status" value="1"/>
</dbReference>
<dbReference type="PIRSF" id="PIRSF002155">
    <property type="entry name" value="Ribosomal_L1"/>
    <property type="match status" value="1"/>
</dbReference>
<dbReference type="SUPFAM" id="SSF56808">
    <property type="entry name" value="Ribosomal protein L1"/>
    <property type="match status" value="1"/>
</dbReference>
<dbReference type="PROSITE" id="PS01199">
    <property type="entry name" value="RIBOSOMAL_L1"/>
    <property type="match status" value="1"/>
</dbReference>
<sequence length="232" mass="24353">MAKISKRRQAFAAKVDRQKLYAIEDALSLVKECASAKFDESIDVAVQLGIDAKKSDQVVRGSVVLPAGTGKSVRVAVFAQGEKAEQARAAGAEIVGMEDLAEQIKAGQMDFDIVIASPDTMRIVGTLGQILGPRGLMPNPKVGTVTPDVATAVKNAKAGQVQFRVDKAGIIHATIGRASFEPTALRSNLSALIEALQKAKPATSKGVYLRKIALSSTMGVGVRVDQATLAAQ</sequence>
<accession>B4E5A9</accession>
<name>RL1_BURCJ</name>
<protein>
    <recommendedName>
        <fullName evidence="1">Large ribosomal subunit protein uL1</fullName>
    </recommendedName>
    <alternativeName>
        <fullName evidence="2">50S ribosomal protein L1</fullName>
    </alternativeName>
</protein>
<proteinExistence type="inferred from homology"/>